<proteinExistence type="inferred from homology"/>
<sequence length="399" mass="41942">MDLAKTNVGCSDLKFCLARESFASAVSWVAKYLPTRPTVPVLSGVLLTGSDSGLTISGFDYEVSAEVQVAAEIASSGSVLVSGRLLSDITRALPNKPVHFYVDGNRVALTCGSARFSLPTMAVEDYPTLPTLPDETGTLPSDVFAEAIGQVAIAAGRDYTLPMLTGIRIEISGDTVVLAATDRFRLAVRELKWSVLSSDFEASVLVPAKTLVEVAKAGTDGSGVCLSLGAGVGVGKDGLFGISGGGKRSTTRLLDAEFPKFRQLLPAEHTAVATIDVAELTEAIKLVALVADRGAQVRMEFGDGILRLSAGADDVGRAEEDLAVAFTGEPLTIAFNPNYLTDGLASVHSERVSFGFTTPSKPALLRPTSNDDVHPTHDGPFPALPTDYVYLLMPVRLPG</sequence>
<organism>
    <name type="scientific">Mycobacterium leprae (strain TN)</name>
    <dbReference type="NCBI Taxonomy" id="272631"/>
    <lineage>
        <taxon>Bacteria</taxon>
        <taxon>Bacillati</taxon>
        <taxon>Actinomycetota</taxon>
        <taxon>Actinomycetes</taxon>
        <taxon>Mycobacteriales</taxon>
        <taxon>Mycobacteriaceae</taxon>
        <taxon>Mycobacterium</taxon>
    </lineage>
</organism>
<dbReference type="EMBL" id="L39923">
    <property type="protein sequence ID" value="AAB53142.1"/>
    <property type="molecule type" value="Genomic_DNA"/>
</dbReference>
<dbReference type="EMBL" id="Z70722">
    <property type="protein sequence ID" value="CAA94709.1"/>
    <property type="molecule type" value="Genomic_DNA"/>
</dbReference>
<dbReference type="EMBL" id="AL583917">
    <property type="protein sequence ID" value="CAC29510.1"/>
    <property type="molecule type" value="Genomic_DNA"/>
</dbReference>
<dbReference type="PIR" id="T10002">
    <property type="entry name" value="T10002"/>
</dbReference>
<dbReference type="RefSeq" id="NP_301130.1">
    <property type="nucleotide sequence ID" value="NC_002677.1"/>
</dbReference>
<dbReference type="RefSeq" id="WP_010907455.1">
    <property type="nucleotide sequence ID" value="NC_002677.1"/>
</dbReference>
<dbReference type="SMR" id="P46387"/>
<dbReference type="STRING" id="272631.gene:17573811"/>
<dbReference type="KEGG" id="mle:ML0002"/>
<dbReference type="PATRIC" id="fig|272631.5.peg.2"/>
<dbReference type="Leproma" id="ML0002"/>
<dbReference type="eggNOG" id="COG0592">
    <property type="taxonomic scope" value="Bacteria"/>
</dbReference>
<dbReference type="HOGENOM" id="CLU_038149_1_1_11"/>
<dbReference type="OrthoDB" id="468978at2"/>
<dbReference type="Proteomes" id="UP000000806">
    <property type="component" value="Chromosome"/>
</dbReference>
<dbReference type="GO" id="GO:0005737">
    <property type="term" value="C:cytoplasm"/>
    <property type="evidence" value="ECO:0007669"/>
    <property type="project" value="UniProtKB-SubCell"/>
</dbReference>
<dbReference type="GO" id="GO:0009360">
    <property type="term" value="C:DNA polymerase III complex"/>
    <property type="evidence" value="ECO:0007669"/>
    <property type="project" value="InterPro"/>
</dbReference>
<dbReference type="GO" id="GO:0008408">
    <property type="term" value="F:3'-5' exonuclease activity"/>
    <property type="evidence" value="ECO:0007669"/>
    <property type="project" value="InterPro"/>
</dbReference>
<dbReference type="GO" id="GO:0003677">
    <property type="term" value="F:DNA binding"/>
    <property type="evidence" value="ECO:0007669"/>
    <property type="project" value="UniProtKB-KW"/>
</dbReference>
<dbReference type="GO" id="GO:0003887">
    <property type="term" value="F:DNA-directed DNA polymerase activity"/>
    <property type="evidence" value="ECO:0007669"/>
    <property type="project" value="UniProtKB-KW"/>
</dbReference>
<dbReference type="GO" id="GO:0006271">
    <property type="term" value="P:DNA strand elongation involved in DNA replication"/>
    <property type="evidence" value="ECO:0007669"/>
    <property type="project" value="TreeGrafter"/>
</dbReference>
<dbReference type="CDD" id="cd00140">
    <property type="entry name" value="beta_clamp"/>
    <property type="match status" value="1"/>
</dbReference>
<dbReference type="FunFam" id="3.10.150.10:FF:000001">
    <property type="entry name" value="Beta sliding clamp"/>
    <property type="match status" value="1"/>
</dbReference>
<dbReference type="FunFam" id="3.10.150.10:FF:000005">
    <property type="entry name" value="Beta sliding clamp"/>
    <property type="match status" value="1"/>
</dbReference>
<dbReference type="Gene3D" id="3.10.150.10">
    <property type="entry name" value="DNA Polymerase III, subunit A, domain 2"/>
    <property type="match status" value="3"/>
</dbReference>
<dbReference type="InterPro" id="IPR046938">
    <property type="entry name" value="DNA_clamp_sf"/>
</dbReference>
<dbReference type="InterPro" id="IPR001001">
    <property type="entry name" value="DNA_polIII_beta"/>
</dbReference>
<dbReference type="InterPro" id="IPR022635">
    <property type="entry name" value="DNA_polIII_beta_C"/>
</dbReference>
<dbReference type="InterPro" id="IPR022637">
    <property type="entry name" value="DNA_polIII_beta_cen"/>
</dbReference>
<dbReference type="InterPro" id="IPR022634">
    <property type="entry name" value="DNA_polIII_beta_N"/>
</dbReference>
<dbReference type="NCBIfam" id="TIGR00663">
    <property type="entry name" value="dnan"/>
    <property type="match status" value="1"/>
</dbReference>
<dbReference type="PANTHER" id="PTHR30478:SF0">
    <property type="entry name" value="BETA SLIDING CLAMP"/>
    <property type="match status" value="1"/>
</dbReference>
<dbReference type="PANTHER" id="PTHR30478">
    <property type="entry name" value="DNA POLYMERASE III SUBUNIT BETA"/>
    <property type="match status" value="1"/>
</dbReference>
<dbReference type="Pfam" id="PF00712">
    <property type="entry name" value="DNA_pol3_beta"/>
    <property type="match status" value="1"/>
</dbReference>
<dbReference type="Pfam" id="PF02767">
    <property type="entry name" value="DNA_pol3_beta_2"/>
    <property type="match status" value="1"/>
</dbReference>
<dbReference type="Pfam" id="PF02768">
    <property type="entry name" value="DNA_pol3_beta_3"/>
    <property type="match status" value="1"/>
</dbReference>
<dbReference type="PIRSF" id="PIRSF000804">
    <property type="entry name" value="DNA_pol_III_b"/>
    <property type="match status" value="1"/>
</dbReference>
<dbReference type="SMART" id="SM00480">
    <property type="entry name" value="POL3Bc"/>
    <property type="match status" value="1"/>
</dbReference>
<dbReference type="SUPFAM" id="SSF55979">
    <property type="entry name" value="DNA clamp"/>
    <property type="match status" value="3"/>
</dbReference>
<keyword id="KW-0963">Cytoplasm</keyword>
<keyword id="KW-0235">DNA replication</keyword>
<keyword id="KW-0238">DNA-binding</keyword>
<keyword id="KW-0239">DNA-directed DNA polymerase</keyword>
<keyword id="KW-0548">Nucleotidyltransferase</keyword>
<keyword id="KW-1185">Reference proteome</keyword>
<keyword id="KW-0808">Transferase</keyword>
<feature type="chain" id="PRO_0000105448" description="Beta sliding clamp">
    <location>
        <begin position="1"/>
        <end position="399"/>
    </location>
</feature>
<reference key="1">
    <citation type="journal article" date="1996" name="Microbiology">
        <title>Gene arrangement and organization in an approximately 76 kb fragment encompassing the oriC region of the chromosome of Mycobacterium leprae.</title>
        <authorList>
            <person name="Fsihi H."/>
            <person name="de Rossi E."/>
            <person name="Salazar L."/>
            <person name="Cantoni R."/>
            <person name="Labo M."/>
            <person name="Riccardi G."/>
            <person name="Takiff H.E."/>
            <person name="Eiglmeier K."/>
            <person name="Bergh S."/>
            <person name="Cole S.T."/>
        </authorList>
    </citation>
    <scope>NUCLEOTIDE SEQUENCE [GENOMIC DNA]</scope>
</reference>
<reference key="2">
    <citation type="journal article" date="1996" name="Mol. Microbiol.">
        <title>Organization of the origins of replication of the chromosomes of Mycobacterium smegmatis, Mycobacterium leprae and Mycobacterium tuberculosis and isolation of a functional origin from M. smegmatis.</title>
        <authorList>
            <person name="Salazar L."/>
            <person name="Fsihi H."/>
            <person name="De Rossi E."/>
            <person name="Riccardi G."/>
            <person name="Rios C."/>
            <person name="Cole S.T."/>
            <person name="Takiff H.E."/>
        </authorList>
    </citation>
    <scope>NUCLEOTIDE SEQUENCE [GENOMIC DNA]</scope>
</reference>
<reference key="3">
    <citation type="journal article" date="2001" name="Nature">
        <title>Massive gene decay in the leprosy bacillus.</title>
        <authorList>
            <person name="Cole S.T."/>
            <person name="Eiglmeier K."/>
            <person name="Parkhill J."/>
            <person name="James K.D."/>
            <person name="Thomson N.R."/>
            <person name="Wheeler P.R."/>
            <person name="Honore N."/>
            <person name="Garnier T."/>
            <person name="Churcher C.M."/>
            <person name="Harris D.E."/>
            <person name="Mungall K.L."/>
            <person name="Basham D."/>
            <person name="Brown D."/>
            <person name="Chillingworth T."/>
            <person name="Connor R."/>
            <person name="Davies R.M."/>
            <person name="Devlin K."/>
            <person name="Duthoy S."/>
            <person name="Feltwell T."/>
            <person name="Fraser A."/>
            <person name="Hamlin N."/>
            <person name="Holroyd S."/>
            <person name="Hornsby T."/>
            <person name="Jagels K."/>
            <person name="Lacroix C."/>
            <person name="Maclean J."/>
            <person name="Moule S."/>
            <person name="Murphy L.D."/>
            <person name="Oliver K."/>
            <person name="Quail M.A."/>
            <person name="Rajandream M.A."/>
            <person name="Rutherford K.M."/>
            <person name="Rutter S."/>
            <person name="Seeger K."/>
            <person name="Simon S."/>
            <person name="Simmonds M."/>
            <person name="Skelton J."/>
            <person name="Squares R."/>
            <person name="Squares S."/>
            <person name="Stevens K."/>
            <person name="Taylor K."/>
            <person name="Whitehead S."/>
            <person name="Woodward J.R."/>
            <person name="Barrell B.G."/>
        </authorList>
    </citation>
    <scope>NUCLEOTIDE SEQUENCE [LARGE SCALE GENOMIC DNA]</scope>
    <source>
        <strain>TN</strain>
    </source>
</reference>
<comment type="function">
    <text evidence="1">Confers DNA tethering and processivity to DNA polymerases and other proteins. Acts as a clamp, forming a ring around DNA (a reaction catalyzed by the clamp-loading complex) which diffuses in an ATP-independent manner freely and bidirectionally along dsDNA. Initially characterized for its ability to contact the catalytic subunit of DNA polymerase III (Pol III), a complex, multichain enzyme responsible for most of the replicative synthesis in bacteria; Pol III exhibits 3'-5' exonuclease proofreading activity. The beta chain is required for initiation of replication as well as for processivity of DNA replication.</text>
</comment>
<comment type="subunit">
    <text evidence="1">Forms a ring-shaped head-to-tail homodimer around DNA which binds and tethers DNA polymerases and other proteins to the DNA. The DNA replisome complex has a single clamp-loading complex (3 tau and 1 each of delta, delta', psi and chi subunits) which binds 3 Pol III cores (1 core on the leading strand and 2 on the lagging strand) each with a beta sliding clamp dimer. Additional proteins in the replisome are other copies of gamma, psi and chi, Ssb, DNA helicase and RNA primase.</text>
</comment>
<comment type="subcellular location">
    <subcellularLocation>
        <location evidence="1">Cytoplasm</location>
    </subcellularLocation>
</comment>
<comment type="similarity">
    <text evidence="2">Belongs to the beta sliding clamp family.</text>
</comment>
<gene>
    <name type="primary">dnaN</name>
    <name type="ordered locus">ML0002</name>
</gene>
<evidence type="ECO:0000250" key="1">
    <source>
        <dbReference type="UniProtKB" id="P0A988"/>
    </source>
</evidence>
<evidence type="ECO:0000305" key="2"/>
<name>DPO3B_MYCLE</name>
<protein>
    <recommendedName>
        <fullName>Beta sliding clamp</fullName>
        <shortName>Beta clamp</shortName>
        <shortName>Sliding clamp</shortName>
    </recommendedName>
    <alternativeName>
        <fullName>Beta-clamp processivity factor</fullName>
    </alternativeName>
    <alternativeName>
        <fullName>DNA polymerase III beta sliding clamp subunit</fullName>
    </alternativeName>
    <alternativeName>
        <fullName>DNA polymerase III subunit beta</fullName>
    </alternativeName>
</protein>
<accession>P46387</accession>